<protein>
    <recommendedName>
        <fullName evidence="2">Vasoactive intestinal polypeptide receptor 1</fullName>
        <shortName>VIP-R-1</shortName>
    </recommendedName>
    <alternativeName>
        <fullName>Pituitary adenylate cyclase-activating polypeptide type II receptor</fullName>
        <shortName>PACAP type II receptor</shortName>
        <shortName>PACAP-R-2</shortName>
        <shortName>PACAP-R2</shortName>
    </alternativeName>
</protein>
<reference key="1">
    <citation type="submission" date="1996-04" db="EMBL/GenBank/DDBJ databases">
        <authorList>
            <person name="Hsiung H.M."/>
            <person name="Smith D.P."/>
            <person name="Hyslop P.A."/>
            <person name="Heiman M.L."/>
            <person name="Hassan H.A."/>
            <person name="Zhang X."/>
        </authorList>
    </citation>
    <scope>NUCLEOTIDE SEQUENCE [MRNA]</scope>
</reference>
<gene>
    <name type="primary">VIPR1</name>
</gene>
<organism>
    <name type="scientific">Sus scrofa</name>
    <name type="common">Pig</name>
    <dbReference type="NCBI Taxonomy" id="9823"/>
    <lineage>
        <taxon>Eukaryota</taxon>
        <taxon>Metazoa</taxon>
        <taxon>Chordata</taxon>
        <taxon>Craniata</taxon>
        <taxon>Vertebrata</taxon>
        <taxon>Euteleostomi</taxon>
        <taxon>Mammalia</taxon>
        <taxon>Eutheria</taxon>
        <taxon>Laurasiatheria</taxon>
        <taxon>Artiodactyla</taxon>
        <taxon>Suina</taxon>
        <taxon>Suidae</taxon>
        <taxon>Sus</taxon>
    </lineage>
</organism>
<name>VIPR1_PIG</name>
<proteinExistence type="evidence at transcript level"/>
<dbReference type="EMBL" id="U49434">
    <property type="protein sequence ID" value="AAA93390.1"/>
    <property type="molecule type" value="mRNA"/>
</dbReference>
<dbReference type="RefSeq" id="NP_999201.1">
    <property type="nucleotide sequence ID" value="NM_214036.1"/>
</dbReference>
<dbReference type="SMR" id="Q28992"/>
<dbReference type="FunCoup" id="Q28992">
    <property type="interactions" value="240"/>
</dbReference>
<dbReference type="STRING" id="9823.ENSSSCP00000059376"/>
<dbReference type="GlyCosmos" id="Q28992">
    <property type="glycosylation" value="4 sites, No reported glycans"/>
</dbReference>
<dbReference type="GlyGen" id="Q28992">
    <property type="glycosylation" value="4 sites"/>
</dbReference>
<dbReference type="PaxDb" id="9823-ENSSSCP00000012026"/>
<dbReference type="GeneID" id="100155402"/>
<dbReference type="KEGG" id="ssc:100155402"/>
<dbReference type="CTD" id="7433"/>
<dbReference type="eggNOG" id="KOG4564">
    <property type="taxonomic scope" value="Eukaryota"/>
</dbReference>
<dbReference type="InParanoid" id="Q28992"/>
<dbReference type="OrthoDB" id="5967113at2759"/>
<dbReference type="Proteomes" id="UP000008227">
    <property type="component" value="Unplaced"/>
</dbReference>
<dbReference type="Proteomes" id="UP000314985">
    <property type="component" value="Unplaced"/>
</dbReference>
<dbReference type="Proteomes" id="UP000694570">
    <property type="component" value="Unplaced"/>
</dbReference>
<dbReference type="Proteomes" id="UP000694571">
    <property type="component" value="Unplaced"/>
</dbReference>
<dbReference type="Proteomes" id="UP000694720">
    <property type="component" value="Unplaced"/>
</dbReference>
<dbReference type="Proteomes" id="UP000694722">
    <property type="component" value="Unplaced"/>
</dbReference>
<dbReference type="Proteomes" id="UP000694723">
    <property type="component" value="Unplaced"/>
</dbReference>
<dbReference type="Proteomes" id="UP000694724">
    <property type="component" value="Unplaced"/>
</dbReference>
<dbReference type="Proteomes" id="UP000694725">
    <property type="component" value="Unplaced"/>
</dbReference>
<dbReference type="Proteomes" id="UP000694726">
    <property type="component" value="Unplaced"/>
</dbReference>
<dbReference type="Proteomes" id="UP000694727">
    <property type="component" value="Unplaced"/>
</dbReference>
<dbReference type="Proteomes" id="UP000694728">
    <property type="component" value="Unplaced"/>
</dbReference>
<dbReference type="GO" id="GO:0005886">
    <property type="term" value="C:plasma membrane"/>
    <property type="evidence" value="ECO:0000318"/>
    <property type="project" value="GO_Central"/>
</dbReference>
<dbReference type="GO" id="GO:0008528">
    <property type="term" value="F:G protein-coupled peptide receptor activity"/>
    <property type="evidence" value="ECO:0000318"/>
    <property type="project" value="GO_Central"/>
</dbReference>
<dbReference type="GO" id="GO:0017046">
    <property type="term" value="F:peptide hormone binding"/>
    <property type="evidence" value="ECO:0000318"/>
    <property type="project" value="GO_Central"/>
</dbReference>
<dbReference type="GO" id="GO:0004999">
    <property type="term" value="F:vasoactive intestinal polypeptide receptor activity"/>
    <property type="evidence" value="ECO:0000250"/>
    <property type="project" value="UniProtKB"/>
</dbReference>
<dbReference type="GO" id="GO:0007189">
    <property type="term" value="P:adenylate cyclase-activating G protein-coupled receptor signaling pathway"/>
    <property type="evidence" value="ECO:0000250"/>
    <property type="project" value="UniProtKB"/>
</dbReference>
<dbReference type="GO" id="GO:0007188">
    <property type="term" value="P:adenylate cyclase-modulating G protein-coupled receptor signaling pathway"/>
    <property type="evidence" value="ECO:0000318"/>
    <property type="project" value="GO_Central"/>
</dbReference>
<dbReference type="GO" id="GO:0007166">
    <property type="term" value="P:cell surface receptor signaling pathway"/>
    <property type="evidence" value="ECO:0007669"/>
    <property type="project" value="InterPro"/>
</dbReference>
<dbReference type="FunFam" id="4.10.1240.10:FF:000016">
    <property type="entry name" value="Vasoactive intestinal peptide receptor 1"/>
    <property type="match status" value="1"/>
</dbReference>
<dbReference type="FunFam" id="1.20.1070.10:FF:000032">
    <property type="entry name" value="Vasoactive intestinal polypeptide receptor 1"/>
    <property type="match status" value="1"/>
</dbReference>
<dbReference type="Gene3D" id="4.10.1240.10">
    <property type="entry name" value="GPCR, family 2, extracellular hormone receptor domain"/>
    <property type="match status" value="1"/>
</dbReference>
<dbReference type="Gene3D" id="1.20.1070.10">
    <property type="entry name" value="Rhodopsin 7-helix transmembrane proteins"/>
    <property type="match status" value="1"/>
</dbReference>
<dbReference type="InterPro" id="IPR050332">
    <property type="entry name" value="GPCR_2"/>
</dbReference>
<dbReference type="InterPro" id="IPR017981">
    <property type="entry name" value="GPCR_2-like_7TM"/>
</dbReference>
<dbReference type="InterPro" id="IPR036445">
    <property type="entry name" value="GPCR_2_extracell_dom_sf"/>
</dbReference>
<dbReference type="InterPro" id="IPR001879">
    <property type="entry name" value="GPCR_2_extracellular_dom"/>
</dbReference>
<dbReference type="InterPro" id="IPR000832">
    <property type="entry name" value="GPCR_2_secretin-like"/>
</dbReference>
<dbReference type="InterPro" id="IPR017983">
    <property type="entry name" value="GPCR_2_secretin-like_CS"/>
</dbReference>
<dbReference type="InterPro" id="IPR001571">
    <property type="entry name" value="GPCR_2_VIP_rcpt"/>
</dbReference>
<dbReference type="InterPro" id="IPR001771">
    <property type="entry name" value="GPCR_2_VIP_rcpt_1"/>
</dbReference>
<dbReference type="PANTHER" id="PTHR45620">
    <property type="entry name" value="PDF RECEPTOR-LIKE PROTEIN-RELATED"/>
    <property type="match status" value="1"/>
</dbReference>
<dbReference type="PANTHER" id="PTHR45620:SF24">
    <property type="entry name" value="VASOACTIVE INTESTINAL POLYPEPTIDE RECEPTOR 1"/>
    <property type="match status" value="1"/>
</dbReference>
<dbReference type="Pfam" id="PF00002">
    <property type="entry name" value="7tm_2"/>
    <property type="match status" value="1"/>
</dbReference>
<dbReference type="Pfam" id="PF02793">
    <property type="entry name" value="HRM"/>
    <property type="match status" value="1"/>
</dbReference>
<dbReference type="PRINTS" id="PR00249">
    <property type="entry name" value="GPCRSECRETIN"/>
</dbReference>
<dbReference type="PRINTS" id="PR00491">
    <property type="entry name" value="VASOACTVEIPR"/>
</dbReference>
<dbReference type="PRINTS" id="PR01154">
    <property type="entry name" value="VIP1RECEPTOR"/>
</dbReference>
<dbReference type="SMART" id="SM00008">
    <property type="entry name" value="HormR"/>
    <property type="match status" value="1"/>
</dbReference>
<dbReference type="SUPFAM" id="SSF81321">
    <property type="entry name" value="Family A G protein-coupled receptor-like"/>
    <property type="match status" value="1"/>
</dbReference>
<dbReference type="SUPFAM" id="SSF111418">
    <property type="entry name" value="Hormone receptor domain"/>
    <property type="match status" value="1"/>
</dbReference>
<dbReference type="PROSITE" id="PS00649">
    <property type="entry name" value="G_PROTEIN_RECEP_F2_1"/>
    <property type="match status" value="1"/>
</dbReference>
<dbReference type="PROSITE" id="PS00650">
    <property type="entry name" value="G_PROTEIN_RECEP_F2_2"/>
    <property type="match status" value="1"/>
</dbReference>
<dbReference type="PROSITE" id="PS50227">
    <property type="entry name" value="G_PROTEIN_RECEP_F2_3"/>
    <property type="match status" value="1"/>
</dbReference>
<dbReference type="PROSITE" id="PS50261">
    <property type="entry name" value="G_PROTEIN_RECEP_F2_4"/>
    <property type="match status" value="1"/>
</dbReference>
<sequence>MRPLSPPPAGWFCVLAGVLACVLGPVGSWAVGLQQEECDYLQMIKVQHKQCLEEAQLENETSGCSKMWDNLTCWPATPRGQVVVLACPLIFKLFSPTQGLNVSRNCTDEGWTPLEPGPYPIACGMDDKASGLDEQQTVFYNSVKTGYTIGYSLSLAALLVATAILSLFRKLHCTRNYIHMHLFISFILRATAVFIKDLALFDSEESDHCSKGSVGCKAAVVLFQYCVMANFFWLLVEGLYLHTLLAVSFFSERKYFWGYIFVGWGVPSTFIMVWTVVRIHFEDYGCWDTIHSSLWWIIKAPILASILVNFILFIRIIGILVQKLRPPDVGKSDNSPYSRLAKSTLLLIPLFGVHYIMFAFFPDNFKAEVKMVFELIVGSFQGCVVAILYCFLNGEVQAELRRKWRRWHQQGVLGWDSKYQHPSGGSNGDTCSTQVSMLTRVSPSARRSSSFQAEVSLV</sequence>
<feature type="signal peptide" evidence="3">
    <location>
        <begin position="1"/>
        <end position="31"/>
    </location>
</feature>
<feature type="chain" id="PRO_0000012857" description="Vasoactive intestinal polypeptide receptor 1">
    <location>
        <begin position="32"/>
        <end position="458"/>
    </location>
</feature>
<feature type="topological domain" description="Extracellular" evidence="4">
    <location>
        <begin position="32"/>
        <end position="142"/>
    </location>
</feature>
<feature type="transmembrane region" description="Helical; Name=1" evidence="1">
    <location>
        <begin position="143"/>
        <end position="167"/>
    </location>
</feature>
<feature type="topological domain" description="Cytoplasmic" evidence="4">
    <location>
        <begin position="168"/>
        <end position="175"/>
    </location>
</feature>
<feature type="transmembrane region" description="Helical; Name=2" evidence="1">
    <location>
        <begin position="176"/>
        <end position="197"/>
    </location>
</feature>
<feature type="topological domain" description="Extracellular" evidence="4">
    <location>
        <begin position="198"/>
        <end position="217"/>
    </location>
</feature>
<feature type="transmembrane region" description="Helical; Name=3" evidence="1">
    <location>
        <begin position="218"/>
        <end position="242"/>
    </location>
</feature>
<feature type="topological domain" description="Cytoplasmic" evidence="4">
    <location>
        <begin position="243"/>
        <end position="255"/>
    </location>
</feature>
<feature type="transmembrane region" description="Helical; Name=4" evidence="1">
    <location>
        <begin position="256"/>
        <end position="277"/>
    </location>
</feature>
<feature type="topological domain" description="Extracellular" evidence="4">
    <location>
        <begin position="278"/>
        <end position="292"/>
    </location>
</feature>
<feature type="transmembrane region" description="Helical; Name=5" evidence="1">
    <location>
        <begin position="293"/>
        <end position="317"/>
    </location>
</feature>
<feature type="topological domain" description="Cytoplasmic" evidence="4">
    <location>
        <begin position="318"/>
        <end position="339"/>
    </location>
</feature>
<feature type="transmembrane region" description="Helical; Name=6" evidence="1">
    <location>
        <begin position="340"/>
        <end position="360"/>
    </location>
</feature>
<feature type="topological domain" description="Extracellular" evidence="4">
    <location>
        <begin position="361"/>
        <end position="368"/>
    </location>
</feature>
<feature type="transmembrane region" description="Helical; Name=7" evidence="1">
    <location>
        <begin position="369"/>
        <end position="392"/>
    </location>
</feature>
<feature type="topological domain" description="Cytoplasmic" evidence="4">
    <location>
        <begin position="393"/>
        <end position="458"/>
    </location>
</feature>
<feature type="glycosylation site" description="N-linked (GlcNAc...) asparagine" evidence="3">
    <location>
        <position position="59"/>
    </location>
</feature>
<feature type="glycosylation site" description="N-linked (GlcNAc...) asparagine" evidence="3">
    <location>
        <position position="70"/>
    </location>
</feature>
<feature type="glycosylation site" description="N-linked (GlcNAc...) asparagine" evidence="3">
    <location>
        <position position="101"/>
    </location>
</feature>
<feature type="glycosylation site" description="N-linked (GlcNAc...) asparagine" evidence="3">
    <location>
        <position position="105"/>
    </location>
</feature>
<feature type="disulfide bond" evidence="1">
    <location>
        <begin position="38"/>
        <end position="209"/>
    </location>
</feature>
<feature type="disulfide bond" evidence="1">
    <location>
        <begin position="51"/>
        <end position="73"/>
    </location>
</feature>
<feature type="disulfide bond" evidence="1">
    <location>
        <begin position="64"/>
        <end position="106"/>
    </location>
</feature>
<feature type="disulfide bond" evidence="1">
    <location>
        <begin position="87"/>
        <end position="123"/>
    </location>
</feature>
<feature type="disulfide bond" evidence="1">
    <location>
        <begin position="216"/>
        <end position="286"/>
    </location>
</feature>
<accession>Q28992</accession>
<comment type="function">
    <text evidence="1">G protein-coupled receptor activated by the neuropeptides vasoactive intestinal peptide (VIP) and pituitary adenylate cyclase-activating polypeptide (ADCYAP1/PACAP). Binds VIP and both PACAP27 and PACAP38 bioactive peptides with the following order of ligand affinity VIP = PACAP27 &gt; PACAP38. Ligand binding causes a conformation change that triggers signaling via guanine nucleotide-binding proteins (G proteins) and modulates the activity of downstream effectors. Activates cAMP-dependent pathway.</text>
</comment>
<comment type="subunit">
    <text evidence="1">Interacts with ADCYAP1/PACAP; activated by both PACAP27 and PACAP38 neuropeptides. Interacts with VIP; the interaction results in VIPR1 activation.</text>
</comment>
<comment type="subcellular location">
    <subcellularLocation>
        <location evidence="1">Cell membrane</location>
        <topology evidence="1">Multi-pass membrane protein</topology>
    </subcellularLocation>
</comment>
<comment type="similarity">
    <text evidence="4">Belongs to the G-protein coupled receptor 2 family.</text>
</comment>
<evidence type="ECO:0000250" key="1">
    <source>
        <dbReference type="UniProtKB" id="P32241"/>
    </source>
</evidence>
<evidence type="ECO:0000250" key="2">
    <source>
        <dbReference type="UniProtKB" id="P97751"/>
    </source>
</evidence>
<evidence type="ECO:0000255" key="3"/>
<evidence type="ECO:0000305" key="4"/>
<keyword id="KW-1003">Cell membrane</keyword>
<keyword id="KW-1015">Disulfide bond</keyword>
<keyword id="KW-0297">G-protein coupled receptor</keyword>
<keyword id="KW-0325">Glycoprotein</keyword>
<keyword id="KW-0472">Membrane</keyword>
<keyword id="KW-0675">Receptor</keyword>
<keyword id="KW-1185">Reference proteome</keyword>
<keyword id="KW-0732">Signal</keyword>
<keyword id="KW-0807">Transducer</keyword>
<keyword id="KW-0812">Transmembrane</keyword>
<keyword id="KW-1133">Transmembrane helix</keyword>